<gene>
    <name type="primary">ywoH</name>
    <name type="ordered locus">BSU36440</name>
</gene>
<proteinExistence type="predicted"/>
<evidence type="ECO:0000255" key="1">
    <source>
        <dbReference type="PROSITE-ProRule" id="PRU00345"/>
    </source>
</evidence>
<sequence>MSYVNRHLIHQINQSARLIAKKANEQLEPFGLYSSQWSVLYCLRTIGPMTQKEIWSYLNVEAPTVTRTIKRLEENGWVQRRQGEDKREKLVVLTKEAEKKYEEINVKMLKFEEELLADFRDEDKEAFSHLFRMFLQQ</sequence>
<accession>P94578</accession>
<accession>Q795A6</accession>
<keyword id="KW-0238">DNA-binding</keyword>
<keyword id="KW-1185">Reference proteome</keyword>
<keyword id="KW-0804">Transcription</keyword>
<keyword id="KW-0805">Transcription regulation</keyword>
<feature type="chain" id="PRO_0000360556" description="Uncharacterized HTH-type transcriptional regulator YwoH">
    <location>
        <begin position="1"/>
        <end position="137"/>
    </location>
</feature>
<feature type="domain" description="HTH marR-type" evidence="1">
    <location>
        <begin position="5"/>
        <end position="136"/>
    </location>
</feature>
<feature type="DNA-binding region" description="H-T-H motif" evidence="1">
    <location>
        <begin position="51"/>
        <end position="74"/>
    </location>
</feature>
<name>YWOH_BACSU</name>
<reference key="1">
    <citation type="journal article" date="1997" name="Microbiology">
        <title>The Bacillus subtilis genome from gerBC (311 degrees) to licR (334 degrees).</title>
        <authorList>
            <person name="Presecan E."/>
            <person name="Moszer I."/>
            <person name="Boursier L."/>
            <person name="Cruz Ramos H."/>
            <person name="De La Fuente V."/>
            <person name="Hullo M.-F."/>
            <person name="Lelong C."/>
            <person name="Schleich S."/>
            <person name="Sekowska A."/>
            <person name="Song B.H."/>
            <person name="Villani G."/>
            <person name="Kunst F."/>
            <person name="Danchin A."/>
            <person name="Glaser P."/>
        </authorList>
    </citation>
    <scope>NUCLEOTIDE SEQUENCE [GENOMIC DNA]</scope>
    <source>
        <strain>168</strain>
    </source>
</reference>
<reference key="2">
    <citation type="journal article" date="1997" name="Nature">
        <title>The complete genome sequence of the Gram-positive bacterium Bacillus subtilis.</title>
        <authorList>
            <person name="Kunst F."/>
            <person name="Ogasawara N."/>
            <person name="Moszer I."/>
            <person name="Albertini A.M."/>
            <person name="Alloni G."/>
            <person name="Azevedo V."/>
            <person name="Bertero M.G."/>
            <person name="Bessieres P."/>
            <person name="Bolotin A."/>
            <person name="Borchert S."/>
            <person name="Borriss R."/>
            <person name="Boursier L."/>
            <person name="Brans A."/>
            <person name="Braun M."/>
            <person name="Brignell S.C."/>
            <person name="Bron S."/>
            <person name="Brouillet S."/>
            <person name="Bruschi C.V."/>
            <person name="Caldwell B."/>
            <person name="Capuano V."/>
            <person name="Carter N.M."/>
            <person name="Choi S.-K."/>
            <person name="Codani J.-J."/>
            <person name="Connerton I.F."/>
            <person name="Cummings N.J."/>
            <person name="Daniel R.A."/>
            <person name="Denizot F."/>
            <person name="Devine K.M."/>
            <person name="Duesterhoeft A."/>
            <person name="Ehrlich S.D."/>
            <person name="Emmerson P.T."/>
            <person name="Entian K.-D."/>
            <person name="Errington J."/>
            <person name="Fabret C."/>
            <person name="Ferrari E."/>
            <person name="Foulger D."/>
            <person name="Fritz C."/>
            <person name="Fujita M."/>
            <person name="Fujita Y."/>
            <person name="Fuma S."/>
            <person name="Galizzi A."/>
            <person name="Galleron N."/>
            <person name="Ghim S.-Y."/>
            <person name="Glaser P."/>
            <person name="Goffeau A."/>
            <person name="Golightly E.J."/>
            <person name="Grandi G."/>
            <person name="Guiseppi G."/>
            <person name="Guy B.J."/>
            <person name="Haga K."/>
            <person name="Haiech J."/>
            <person name="Harwood C.R."/>
            <person name="Henaut A."/>
            <person name="Hilbert H."/>
            <person name="Holsappel S."/>
            <person name="Hosono S."/>
            <person name="Hullo M.-F."/>
            <person name="Itaya M."/>
            <person name="Jones L.-M."/>
            <person name="Joris B."/>
            <person name="Karamata D."/>
            <person name="Kasahara Y."/>
            <person name="Klaerr-Blanchard M."/>
            <person name="Klein C."/>
            <person name="Kobayashi Y."/>
            <person name="Koetter P."/>
            <person name="Koningstein G."/>
            <person name="Krogh S."/>
            <person name="Kumano M."/>
            <person name="Kurita K."/>
            <person name="Lapidus A."/>
            <person name="Lardinois S."/>
            <person name="Lauber J."/>
            <person name="Lazarevic V."/>
            <person name="Lee S.-M."/>
            <person name="Levine A."/>
            <person name="Liu H."/>
            <person name="Masuda S."/>
            <person name="Mauel C."/>
            <person name="Medigue C."/>
            <person name="Medina N."/>
            <person name="Mellado R.P."/>
            <person name="Mizuno M."/>
            <person name="Moestl D."/>
            <person name="Nakai S."/>
            <person name="Noback M."/>
            <person name="Noone D."/>
            <person name="O'Reilly M."/>
            <person name="Ogawa K."/>
            <person name="Ogiwara A."/>
            <person name="Oudega B."/>
            <person name="Park S.-H."/>
            <person name="Parro V."/>
            <person name="Pohl T.M."/>
            <person name="Portetelle D."/>
            <person name="Porwollik S."/>
            <person name="Prescott A.M."/>
            <person name="Presecan E."/>
            <person name="Pujic P."/>
            <person name="Purnelle B."/>
            <person name="Rapoport G."/>
            <person name="Rey M."/>
            <person name="Reynolds S."/>
            <person name="Rieger M."/>
            <person name="Rivolta C."/>
            <person name="Rocha E."/>
            <person name="Roche B."/>
            <person name="Rose M."/>
            <person name="Sadaie Y."/>
            <person name="Sato T."/>
            <person name="Scanlan E."/>
            <person name="Schleich S."/>
            <person name="Schroeter R."/>
            <person name="Scoffone F."/>
            <person name="Sekiguchi J."/>
            <person name="Sekowska A."/>
            <person name="Seror S.J."/>
            <person name="Serror P."/>
            <person name="Shin B.-S."/>
            <person name="Soldo B."/>
            <person name="Sorokin A."/>
            <person name="Tacconi E."/>
            <person name="Takagi T."/>
            <person name="Takahashi H."/>
            <person name="Takemaru K."/>
            <person name="Takeuchi M."/>
            <person name="Tamakoshi A."/>
            <person name="Tanaka T."/>
            <person name="Terpstra P."/>
            <person name="Tognoni A."/>
            <person name="Tosato V."/>
            <person name="Uchiyama S."/>
            <person name="Vandenbol M."/>
            <person name="Vannier F."/>
            <person name="Vassarotti A."/>
            <person name="Viari A."/>
            <person name="Wambutt R."/>
            <person name="Wedler E."/>
            <person name="Wedler H."/>
            <person name="Weitzenegger T."/>
            <person name="Winters P."/>
            <person name="Wipat A."/>
            <person name="Yamamoto H."/>
            <person name="Yamane K."/>
            <person name="Yasumoto K."/>
            <person name="Yata K."/>
            <person name="Yoshida K."/>
            <person name="Yoshikawa H.-F."/>
            <person name="Zumstein E."/>
            <person name="Yoshikawa H."/>
            <person name="Danchin A."/>
        </authorList>
    </citation>
    <scope>NUCLEOTIDE SEQUENCE [LARGE SCALE GENOMIC DNA]</scope>
    <source>
        <strain>168</strain>
    </source>
</reference>
<protein>
    <recommendedName>
        <fullName>Uncharacterized HTH-type transcriptional regulator YwoH</fullName>
    </recommendedName>
</protein>
<organism>
    <name type="scientific">Bacillus subtilis (strain 168)</name>
    <dbReference type="NCBI Taxonomy" id="224308"/>
    <lineage>
        <taxon>Bacteria</taxon>
        <taxon>Bacillati</taxon>
        <taxon>Bacillota</taxon>
        <taxon>Bacilli</taxon>
        <taxon>Bacillales</taxon>
        <taxon>Bacillaceae</taxon>
        <taxon>Bacillus</taxon>
    </lineage>
</organism>
<dbReference type="EMBL" id="Z82987">
    <property type="protein sequence ID" value="CAB05380.1"/>
    <property type="molecule type" value="Genomic_DNA"/>
</dbReference>
<dbReference type="EMBL" id="AL009126">
    <property type="protein sequence ID" value="CAB15661.1"/>
    <property type="molecule type" value="Genomic_DNA"/>
</dbReference>
<dbReference type="PIR" id="C70065">
    <property type="entry name" value="C70065"/>
</dbReference>
<dbReference type="RefSeq" id="NP_391525.1">
    <property type="nucleotide sequence ID" value="NC_000964.3"/>
</dbReference>
<dbReference type="RefSeq" id="WP_003227771.1">
    <property type="nucleotide sequence ID" value="NZ_OZ025638.1"/>
</dbReference>
<dbReference type="SMR" id="P94578"/>
<dbReference type="FunCoup" id="P94578">
    <property type="interactions" value="65"/>
</dbReference>
<dbReference type="STRING" id="224308.BSU36440"/>
<dbReference type="PaxDb" id="224308-BSU36440"/>
<dbReference type="EnsemblBacteria" id="CAB15661">
    <property type="protein sequence ID" value="CAB15661"/>
    <property type="gene ID" value="BSU_36440"/>
</dbReference>
<dbReference type="GeneID" id="936923"/>
<dbReference type="KEGG" id="bsu:BSU36440"/>
<dbReference type="PATRIC" id="fig|224308.179.peg.3943"/>
<dbReference type="eggNOG" id="COG1846">
    <property type="taxonomic scope" value="Bacteria"/>
</dbReference>
<dbReference type="InParanoid" id="P94578"/>
<dbReference type="OrthoDB" id="1904211at2"/>
<dbReference type="PhylomeDB" id="P94578"/>
<dbReference type="BioCyc" id="BSUB:BSU36440-MONOMER"/>
<dbReference type="Proteomes" id="UP000001570">
    <property type="component" value="Chromosome"/>
</dbReference>
<dbReference type="GO" id="GO:0003677">
    <property type="term" value="F:DNA binding"/>
    <property type="evidence" value="ECO:0007669"/>
    <property type="project" value="UniProtKB-KW"/>
</dbReference>
<dbReference type="GO" id="GO:0003700">
    <property type="term" value="F:DNA-binding transcription factor activity"/>
    <property type="evidence" value="ECO:0007669"/>
    <property type="project" value="InterPro"/>
</dbReference>
<dbReference type="Gene3D" id="1.10.10.10">
    <property type="entry name" value="Winged helix-like DNA-binding domain superfamily/Winged helix DNA-binding domain"/>
    <property type="match status" value="1"/>
</dbReference>
<dbReference type="InterPro" id="IPR000835">
    <property type="entry name" value="HTH_MarR-typ"/>
</dbReference>
<dbReference type="InterPro" id="IPR036388">
    <property type="entry name" value="WH-like_DNA-bd_sf"/>
</dbReference>
<dbReference type="InterPro" id="IPR036390">
    <property type="entry name" value="WH_DNA-bd_sf"/>
</dbReference>
<dbReference type="PANTHER" id="PTHR42756">
    <property type="entry name" value="TRANSCRIPTIONAL REGULATOR, MARR"/>
    <property type="match status" value="1"/>
</dbReference>
<dbReference type="PANTHER" id="PTHR42756:SF1">
    <property type="entry name" value="TRANSCRIPTIONAL REPRESSOR OF EMRAB OPERON"/>
    <property type="match status" value="1"/>
</dbReference>
<dbReference type="Pfam" id="PF01047">
    <property type="entry name" value="MarR"/>
    <property type="match status" value="1"/>
</dbReference>
<dbReference type="PRINTS" id="PR00598">
    <property type="entry name" value="HTHMARR"/>
</dbReference>
<dbReference type="SMART" id="SM00347">
    <property type="entry name" value="HTH_MARR"/>
    <property type="match status" value="1"/>
</dbReference>
<dbReference type="SUPFAM" id="SSF46785">
    <property type="entry name" value="Winged helix' DNA-binding domain"/>
    <property type="match status" value="1"/>
</dbReference>
<dbReference type="PROSITE" id="PS50995">
    <property type="entry name" value="HTH_MARR_2"/>
    <property type="match status" value="1"/>
</dbReference>